<reference key="1">
    <citation type="journal article" date="2006" name="Proc. Natl. Acad. Sci. U.S.A.">
        <title>Molecular genetic anatomy of inter- and intraserotype variation in the human bacterial pathogen group A Streptococcus.</title>
        <authorList>
            <person name="Beres S.B."/>
            <person name="Richter E.W."/>
            <person name="Nagiec M.J."/>
            <person name="Sumby P."/>
            <person name="Porcella S.F."/>
            <person name="DeLeo F.R."/>
            <person name="Musser J.M."/>
        </authorList>
    </citation>
    <scope>NUCLEOTIDE SEQUENCE [LARGE SCALE GENOMIC DNA]</scope>
    <source>
        <strain>MGAS10270</strain>
    </source>
</reference>
<name>RS6_STRPD</name>
<sequence length="96" mass="11082">MAKYEILYIIRPNIEEEAKNALVARFDSILTDNGATVVESKDWEKRRLAYEINDFREGLYHIVNLEATDAAALNEFDRLSKINGDILRHMIVKLDA</sequence>
<gene>
    <name evidence="1" type="primary">rpsF</name>
    <name type="ordered locus">MGAS10270_Spy1622</name>
</gene>
<comment type="function">
    <text evidence="1">Binds together with bS18 to 16S ribosomal RNA.</text>
</comment>
<comment type="similarity">
    <text evidence="1">Belongs to the bacterial ribosomal protein bS6 family.</text>
</comment>
<protein>
    <recommendedName>
        <fullName evidence="1">Small ribosomal subunit protein bS6</fullName>
    </recommendedName>
    <alternativeName>
        <fullName evidence="2">30S ribosomal protein S6</fullName>
    </alternativeName>
</protein>
<organism>
    <name type="scientific">Streptococcus pyogenes serotype M2 (strain MGAS10270)</name>
    <dbReference type="NCBI Taxonomy" id="370552"/>
    <lineage>
        <taxon>Bacteria</taxon>
        <taxon>Bacillati</taxon>
        <taxon>Bacillota</taxon>
        <taxon>Bacilli</taxon>
        <taxon>Lactobacillales</taxon>
        <taxon>Streptococcaceae</taxon>
        <taxon>Streptococcus</taxon>
    </lineage>
</organism>
<keyword id="KW-0687">Ribonucleoprotein</keyword>
<keyword id="KW-0689">Ribosomal protein</keyword>
<keyword id="KW-0694">RNA-binding</keyword>
<keyword id="KW-0699">rRNA-binding</keyword>
<evidence type="ECO:0000255" key="1">
    <source>
        <dbReference type="HAMAP-Rule" id="MF_00360"/>
    </source>
</evidence>
<evidence type="ECO:0000305" key="2"/>
<proteinExistence type="inferred from homology"/>
<feature type="chain" id="PRO_1000005366" description="Small ribosomal subunit protein bS6">
    <location>
        <begin position="1"/>
        <end position="96"/>
    </location>
</feature>
<dbReference type="EMBL" id="CP000260">
    <property type="protein sequence ID" value="ABF34687.1"/>
    <property type="molecule type" value="Genomic_DNA"/>
</dbReference>
<dbReference type="RefSeq" id="WP_002983117.1">
    <property type="nucleotide sequence ID" value="NZ_CVUH01000011.1"/>
</dbReference>
<dbReference type="SMR" id="Q1JF72"/>
<dbReference type="GeneID" id="83689976"/>
<dbReference type="KEGG" id="sph:MGAS10270_Spy1622"/>
<dbReference type="HOGENOM" id="CLU_113441_5_3_9"/>
<dbReference type="Proteomes" id="UP000002436">
    <property type="component" value="Chromosome"/>
</dbReference>
<dbReference type="GO" id="GO:0005737">
    <property type="term" value="C:cytoplasm"/>
    <property type="evidence" value="ECO:0007669"/>
    <property type="project" value="UniProtKB-ARBA"/>
</dbReference>
<dbReference type="GO" id="GO:1990904">
    <property type="term" value="C:ribonucleoprotein complex"/>
    <property type="evidence" value="ECO:0007669"/>
    <property type="project" value="UniProtKB-KW"/>
</dbReference>
<dbReference type="GO" id="GO:0005840">
    <property type="term" value="C:ribosome"/>
    <property type="evidence" value="ECO:0007669"/>
    <property type="project" value="UniProtKB-KW"/>
</dbReference>
<dbReference type="GO" id="GO:0070181">
    <property type="term" value="F:small ribosomal subunit rRNA binding"/>
    <property type="evidence" value="ECO:0007669"/>
    <property type="project" value="TreeGrafter"/>
</dbReference>
<dbReference type="GO" id="GO:0003735">
    <property type="term" value="F:structural constituent of ribosome"/>
    <property type="evidence" value="ECO:0007669"/>
    <property type="project" value="InterPro"/>
</dbReference>
<dbReference type="GO" id="GO:0006412">
    <property type="term" value="P:translation"/>
    <property type="evidence" value="ECO:0007669"/>
    <property type="project" value="UniProtKB-UniRule"/>
</dbReference>
<dbReference type="CDD" id="cd00473">
    <property type="entry name" value="bS6"/>
    <property type="match status" value="1"/>
</dbReference>
<dbReference type="FunFam" id="3.30.70.60:FF:000002">
    <property type="entry name" value="30S ribosomal protein S6"/>
    <property type="match status" value="1"/>
</dbReference>
<dbReference type="Gene3D" id="3.30.70.60">
    <property type="match status" value="1"/>
</dbReference>
<dbReference type="HAMAP" id="MF_00360">
    <property type="entry name" value="Ribosomal_bS6"/>
    <property type="match status" value="1"/>
</dbReference>
<dbReference type="InterPro" id="IPR000529">
    <property type="entry name" value="Ribosomal_bS6"/>
</dbReference>
<dbReference type="InterPro" id="IPR035980">
    <property type="entry name" value="Ribosomal_bS6_sf"/>
</dbReference>
<dbReference type="InterPro" id="IPR020814">
    <property type="entry name" value="Ribosomal_S6_plastid/chlpt"/>
</dbReference>
<dbReference type="InterPro" id="IPR014717">
    <property type="entry name" value="Transl_elong_EF1B/ribsomal_bS6"/>
</dbReference>
<dbReference type="NCBIfam" id="TIGR00166">
    <property type="entry name" value="S6"/>
    <property type="match status" value="1"/>
</dbReference>
<dbReference type="PANTHER" id="PTHR21011">
    <property type="entry name" value="MITOCHONDRIAL 28S RIBOSOMAL PROTEIN S6"/>
    <property type="match status" value="1"/>
</dbReference>
<dbReference type="PANTHER" id="PTHR21011:SF1">
    <property type="entry name" value="SMALL RIBOSOMAL SUBUNIT PROTEIN BS6M"/>
    <property type="match status" value="1"/>
</dbReference>
<dbReference type="Pfam" id="PF01250">
    <property type="entry name" value="Ribosomal_S6"/>
    <property type="match status" value="1"/>
</dbReference>
<dbReference type="SUPFAM" id="SSF54995">
    <property type="entry name" value="Ribosomal protein S6"/>
    <property type="match status" value="1"/>
</dbReference>
<accession>Q1JF72</accession>